<feature type="chain" id="PRO_1000060813" description="Small ribosomal subunit protein uS12">
    <location>
        <begin position="1"/>
        <end position="124"/>
    </location>
</feature>
<feature type="modified residue" description="3-methylthioaspartic acid" evidence="1">
    <location>
        <position position="89"/>
    </location>
</feature>
<feature type="modified residue" description="N6-acetyllysine" evidence="2">
    <location>
        <position position="108"/>
    </location>
</feature>
<gene>
    <name evidence="2" type="primary">rpsL</name>
    <name type="ordered locus">EcE24377A_3811</name>
</gene>
<evidence type="ECO:0000250" key="1"/>
<evidence type="ECO:0000255" key="2">
    <source>
        <dbReference type="HAMAP-Rule" id="MF_00403"/>
    </source>
</evidence>
<evidence type="ECO:0000305" key="3"/>
<sequence>MATVNQLVRKPRARKVAKSNVPALEACPQKRGVCTRVYTTTPKKPNSALRKVCRVRLTNGFEVTSYIGGEGHNLQEHSVILIRGGRVKDLPGVRYHTVRGALDCSGVKDRKQARSKYGVKRPKA</sequence>
<name>RS12_ECO24</name>
<keyword id="KW-0007">Acetylation</keyword>
<keyword id="KW-0488">Methylation</keyword>
<keyword id="KW-1185">Reference proteome</keyword>
<keyword id="KW-0687">Ribonucleoprotein</keyword>
<keyword id="KW-0689">Ribosomal protein</keyword>
<keyword id="KW-0694">RNA-binding</keyword>
<keyword id="KW-0699">rRNA-binding</keyword>
<keyword id="KW-0820">tRNA-binding</keyword>
<accession>A7ZSL7</accession>
<proteinExistence type="inferred from homology"/>
<reference key="1">
    <citation type="journal article" date="2008" name="J. Bacteriol.">
        <title>The pangenome structure of Escherichia coli: comparative genomic analysis of E. coli commensal and pathogenic isolates.</title>
        <authorList>
            <person name="Rasko D.A."/>
            <person name="Rosovitz M.J."/>
            <person name="Myers G.S.A."/>
            <person name="Mongodin E.F."/>
            <person name="Fricke W.F."/>
            <person name="Gajer P."/>
            <person name="Crabtree J."/>
            <person name="Sebaihia M."/>
            <person name="Thomson N.R."/>
            <person name="Chaudhuri R."/>
            <person name="Henderson I.R."/>
            <person name="Sperandio V."/>
            <person name="Ravel J."/>
        </authorList>
    </citation>
    <scope>NUCLEOTIDE SEQUENCE [LARGE SCALE GENOMIC DNA]</scope>
    <source>
        <strain>E24377A / ETEC</strain>
    </source>
</reference>
<dbReference type="EMBL" id="CP000800">
    <property type="protein sequence ID" value="ABV20954.1"/>
    <property type="molecule type" value="Genomic_DNA"/>
</dbReference>
<dbReference type="RefSeq" id="WP_000246815.1">
    <property type="nucleotide sequence ID" value="NC_009801.1"/>
</dbReference>
<dbReference type="SMR" id="A7ZSL7"/>
<dbReference type="GeneID" id="98390450"/>
<dbReference type="KEGG" id="ecw:EcE24377A_3811"/>
<dbReference type="HOGENOM" id="CLU_104295_1_2_6"/>
<dbReference type="Proteomes" id="UP000001122">
    <property type="component" value="Chromosome"/>
</dbReference>
<dbReference type="GO" id="GO:0015935">
    <property type="term" value="C:small ribosomal subunit"/>
    <property type="evidence" value="ECO:0007669"/>
    <property type="project" value="InterPro"/>
</dbReference>
<dbReference type="GO" id="GO:0019843">
    <property type="term" value="F:rRNA binding"/>
    <property type="evidence" value="ECO:0007669"/>
    <property type="project" value="UniProtKB-UniRule"/>
</dbReference>
<dbReference type="GO" id="GO:0003735">
    <property type="term" value="F:structural constituent of ribosome"/>
    <property type="evidence" value="ECO:0007669"/>
    <property type="project" value="InterPro"/>
</dbReference>
<dbReference type="GO" id="GO:0000049">
    <property type="term" value="F:tRNA binding"/>
    <property type="evidence" value="ECO:0007669"/>
    <property type="project" value="UniProtKB-UniRule"/>
</dbReference>
<dbReference type="GO" id="GO:0006412">
    <property type="term" value="P:translation"/>
    <property type="evidence" value="ECO:0007669"/>
    <property type="project" value="UniProtKB-UniRule"/>
</dbReference>
<dbReference type="CDD" id="cd03368">
    <property type="entry name" value="Ribosomal_S12"/>
    <property type="match status" value="1"/>
</dbReference>
<dbReference type="FunFam" id="2.40.50.140:FF:000001">
    <property type="entry name" value="30S ribosomal protein S12"/>
    <property type="match status" value="1"/>
</dbReference>
<dbReference type="Gene3D" id="2.40.50.140">
    <property type="entry name" value="Nucleic acid-binding proteins"/>
    <property type="match status" value="1"/>
</dbReference>
<dbReference type="HAMAP" id="MF_00403_B">
    <property type="entry name" value="Ribosomal_uS12_B"/>
    <property type="match status" value="1"/>
</dbReference>
<dbReference type="InterPro" id="IPR012340">
    <property type="entry name" value="NA-bd_OB-fold"/>
</dbReference>
<dbReference type="InterPro" id="IPR006032">
    <property type="entry name" value="Ribosomal_uS12"/>
</dbReference>
<dbReference type="InterPro" id="IPR005679">
    <property type="entry name" value="Ribosomal_uS12_bac"/>
</dbReference>
<dbReference type="NCBIfam" id="TIGR00981">
    <property type="entry name" value="rpsL_bact"/>
    <property type="match status" value="1"/>
</dbReference>
<dbReference type="PANTHER" id="PTHR11652">
    <property type="entry name" value="30S RIBOSOMAL PROTEIN S12 FAMILY MEMBER"/>
    <property type="match status" value="1"/>
</dbReference>
<dbReference type="Pfam" id="PF00164">
    <property type="entry name" value="Ribosom_S12_S23"/>
    <property type="match status" value="1"/>
</dbReference>
<dbReference type="PIRSF" id="PIRSF002133">
    <property type="entry name" value="Ribosomal_S12/S23"/>
    <property type="match status" value="1"/>
</dbReference>
<dbReference type="PRINTS" id="PR01034">
    <property type="entry name" value="RIBOSOMALS12"/>
</dbReference>
<dbReference type="SUPFAM" id="SSF50249">
    <property type="entry name" value="Nucleic acid-binding proteins"/>
    <property type="match status" value="1"/>
</dbReference>
<dbReference type="PROSITE" id="PS00055">
    <property type="entry name" value="RIBOSOMAL_S12"/>
    <property type="match status" value="1"/>
</dbReference>
<comment type="function">
    <text evidence="2">With S4 and S5 plays an important role in translational accuracy.</text>
</comment>
<comment type="function">
    <text evidence="2">Interacts with and stabilizes bases of the 16S rRNA that are involved in tRNA selection in the A site and with the mRNA backbone. Located at the interface of the 30S and 50S subunits, it traverses the body of the 30S subunit contacting proteins on the other side and probably holding the rRNA structure together. The combined cluster of proteins S8, S12 and S17 appears to hold together the shoulder and platform of the 30S subunit.</text>
</comment>
<comment type="subunit">
    <text evidence="2">Part of the 30S ribosomal subunit. Contacts proteins S8 and S17. May interact with IF1 in the 30S initiation complex.</text>
</comment>
<comment type="similarity">
    <text evidence="2">Belongs to the universal ribosomal protein uS12 family.</text>
</comment>
<organism>
    <name type="scientific">Escherichia coli O139:H28 (strain E24377A / ETEC)</name>
    <dbReference type="NCBI Taxonomy" id="331111"/>
    <lineage>
        <taxon>Bacteria</taxon>
        <taxon>Pseudomonadati</taxon>
        <taxon>Pseudomonadota</taxon>
        <taxon>Gammaproteobacteria</taxon>
        <taxon>Enterobacterales</taxon>
        <taxon>Enterobacteriaceae</taxon>
        <taxon>Escherichia</taxon>
    </lineage>
</organism>
<protein>
    <recommendedName>
        <fullName evidence="2">Small ribosomal subunit protein uS12</fullName>
    </recommendedName>
    <alternativeName>
        <fullName evidence="3">30S ribosomal protein S12</fullName>
    </alternativeName>
</protein>